<protein>
    <recommendedName>
        <fullName evidence="6">Toxin CfTX-1</fullName>
        <shortName evidence="6">Toxin 1</shortName>
    </recommendedName>
</protein>
<keyword id="KW-0123">Cardiotoxin</keyword>
<keyword id="KW-0903">Direct protein sequencing</keyword>
<keyword id="KW-1015">Disulfide bond</keyword>
<keyword id="KW-0406">Ion transport</keyword>
<keyword id="KW-0472">Membrane</keyword>
<keyword id="KW-0166">Nematocyst</keyword>
<keyword id="KW-0964">Secreted</keyword>
<keyword id="KW-0732">Signal</keyword>
<keyword id="KW-1052">Target cell membrane</keyword>
<keyword id="KW-1053">Target membrane</keyword>
<keyword id="KW-0800">Toxin</keyword>
<keyword id="KW-0812">Transmembrane</keyword>
<keyword id="KW-0813">Transport</keyword>
<evidence type="ECO:0000250" key="1"/>
<evidence type="ECO:0000250" key="2">
    <source>
        <dbReference type="UniProtKB" id="Q9GV72"/>
    </source>
</evidence>
<evidence type="ECO:0000269" key="3">
    <source>
    </source>
</evidence>
<evidence type="ECO:0000269" key="4">
    <source>
    </source>
</evidence>
<evidence type="ECO:0000269" key="5">
    <source>
    </source>
</evidence>
<evidence type="ECO:0000303" key="6">
    <source>
    </source>
</evidence>
<evidence type="ECO:0000305" key="7"/>
<evidence type="ECO:0000305" key="8">
    <source>
    </source>
</evidence>
<evidence type="ECO:0000305" key="9">
    <source>
    </source>
</evidence>
<proteinExistence type="evidence at protein level"/>
<feature type="signal peptide" evidence="3">
    <location>
        <begin position="1"/>
        <end position="20"/>
    </location>
</feature>
<feature type="chain" id="PRO_0000311592" description="Toxin CfTX-1" evidence="8">
    <location>
        <begin position="21"/>
        <end position="456"/>
    </location>
</feature>
<feature type="sequence conflict" description="In Ref. 1; AA sequence." evidence="7" ref="1">
    <original>T</original>
    <variation>A</variation>
    <location>
        <position position="33"/>
    </location>
</feature>
<feature type="sequence conflict" description="In Ref. 1; AA sequence." evidence="7" ref="1">
    <original>S</original>
    <variation>T</variation>
    <location>
        <position position="41"/>
    </location>
</feature>
<feature type="sequence conflict" description="In Ref. 1; AA sequence." evidence="7" ref="1">
    <original>MLT</original>
    <variation>VLS</variation>
    <location>
        <begin position="221"/>
        <end position="223"/>
    </location>
</feature>
<accession>A7L035</accession>
<comment type="function">
    <text evidence="2 4">May cause profound effects on the cardiovascular system of anesthetized rats (at 25 ug/kg), since the fraction containing this toxin and CfTX-2 produces an initial increase in mean arterial pressure, followed by cardiovascular collapse in all animals within 1 minute of injection (PubMed:24403082). To note, the same fraction does not induce significant change in heart rate (PubMed:24403082). Has weak hemolytic activity (PubMed:24403082). Is lethal to crayfish (By similarity). Causes cutaneous inflammation in humans (By similarity). May act as a pore-forming toxin, disrupting normal transmembrane ion concentration gradients in susceptible cells (By similarity).</text>
</comment>
<comment type="subunit">
    <text evidence="9">Oligomer.</text>
</comment>
<comment type="subcellular location">
    <subcellularLocation>
        <location evidence="3 5">Secreted</location>
    </subcellularLocation>
    <subcellularLocation>
        <location evidence="3 5">Nematocyst</location>
    </subcellularLocation>
    <subcellularLocation>
        <location evidence="1">Target cell membrane</location>
    </subcellularLocation>
    <text evidence="1">Forms a membrane channel in the prey.</text>
</comment>
<comment type="tissue specificity">
    <text evidence="7">Nematocytes.</text>
</comment>
<comment type="PTM">
    <text evidence="7">Contains disulfide bonds.</text>
</comment>
<comment type="miscellaneous">
    <text evidence="4">Negative results: the fraction containing this toxin and CfTX-2 does not cross-react with CfTX-A and CfTX-B antibodies.</text>
</comment>
<comment type="miscellaneous">
    <text evidence="5">Found after both pressure and chemical disruption of nematocysts.</text>
</comment>
<comment type="similarity">
    <text evidence="9">Belongs to the jellyfish toxin family. Type I subfamily.</text>
</comment>
<organism>
    <name type="scientific">Chironex fleckeri</name>
    <name type="common">Australian box jellyfish</name>
    <dbReference type="NCBI Taxonomy" id="45396"/>
    <lineage>
        <taxon>Eukaryota</taxon>
        <taxon>Metazoa</taxon>
        <taxon>Cnidaria</taxon>
        <taxon>Cubozoa</taxon>
        <taxon>Chirodropida</taxon>
        <taxon>Chirodropidae</taxon>
        <taxon>Chironex</taxon>
    </lineage>
</organism>
<reference key="1">
    <citation type="journal article" date="2007" name="Toxicon">
        <title>Identification, cloning and sequencing of two major venom proteins from the box jellyfish, Chironex fleckeri.</title>
        <authorList>
            <person name="Brinkman D."/>
            <person name="Burnell J."/>
        </authorList>
    </citation>
    <scope>NUCLEOTIDE SEQUENCE [MRNA]</scope>
    <scope>PROTEIN SEQUENCE OF 21-42; 167-173; 199-206; 221-235; 307-314 AND 393-405</scope>
    <scope>SUBCELLULAR LOCATION</scope>
    <source>
        <tissue>Nematoblast</tissue>
    </source>
</reference>
<reference key="2">
    <citation type="journal article" date="2014" name="J. Biol. Chem.">
        <title>Chironex fleckeri (box jellyfish) venom proteins: expansion of a cnidarian toxin family that elicits variable cytolytic and cardiovascular effects.</title>
        <authorList>
            <person name="Brinkman D.L."/>
            <person name="Konstantakopoulos N."/>
            <person name="McInerney B.V."/>
            <person name="Mulvenna J."/>
            <person name="Seymour J.E."/>
            <person name="Isbister G.K."/>
            <person name="Hodgson W.C."/>
        </authorList>
    </citation>
    <scope>FUNCTION</scope>
    <scope>FAMILY</scope>
    <source>
        <tissue>Tentacle</tissue>
    </source>
</reference>
<reference key="3">
    <citation type="journal article" date="2015" name="Toxins">
        <title>Firing the sting: chemically induced discharge of cnidae reveals novel proteins and peptides from box jellyfish (Chironex fleckeri) venom.</title>
        <authorList>
            <person name="Jouiaei M."/>
            <person name="Casewell N.R."/>
            <person name="Yanagihara A.A."/>
            <person name="Nouwens A."/>
            <person name="Cribb B.W."/>
            <person name="Whitehead D."/>
            <person name="Jackson T.N."/>
            <person name="Ali S.A."/>
            <person name="Wagstaff S.C."/>
            <person name="Koludarov I."/>
            <person name="Alewood P."/>
            <person name="Hansen J."/>
            <person name="Fry B.G."/>
        </authorList>
    </citation>
    <scope>IDENTIFICATION IN TRANSCRIPTOME AND PROTEOME</scope>
    <scope>SUBCELLULAR LOCATION</scope>
    <source>
        <tissue>Tentacle</tissue>
    </source>
</reference>
<name>JTX11_CHIFL</name>
<dbReference type="EMBL" id="EF636902">
    <property type="protein sequence ID" value="ABS30940.1"/>
    <property type="molecule type" value="mRNA"/>
</dbReference>
<dbReference type="TCDB" id="1.C.112.1.4">
    <property type="family name" value="the cubozoan protein toxin (cpt) family"/>
</dbReference>
<dbReference type="GO" id="GO:0005576">
    <property type="term" value="C:extracellular region"/>
    <property type="evidence" value="ECO:0007669"/>
    <property type="project" value="UniProtKB-SubCell"/>
</dbReference>
<dbReference type="GO" id="GO:0016020">
    <property type="term" value="C:membrane"/>
    <property type="evidence" value="ECO:0007669"/>
    <property type="project" value="UniProtKB-KW"/>
</dbReference>
<dbReference type="GO" id="GO:0042151">
    <property type="term" value="C:nematocyst"/>
    <property type="evidence" value="ECO:0007669"/>
    <property type="project" value="UniProtKB-SubCell"/>
</dbReference>
<dbReference type="GO" id="GO:0044218">
    <property type="term" value="C:other organism cell membrane"/>
    <property type="evidence" value="ECO:0007669"/>
    <property type="project" value="UniProtKB-KW"/>
</dbReference>
<dbReference type="GO" id="GO:0090729">
    <property type="term" value="F:toxin activity"/>
    <property type="evidence" value="ECO:0007669"/>
    <property type="project" value="UniProtKB-KW"/>
</dbReference>
<dbReference type="GO" id="GO:0006811">
    <property type="term" value="P:monoatomic ion transport"/>
    <property type="evidence" value="ECO:0007669"/>
    <property type="project" value="UniProtKB-KW"/>
</dbReference>
<dbReference type="DisProt" id="DP02947"/>
<sequence>MVKMLFFAFLPLLFMTGIAAESTISSGLNSLKTKIDAKMPSGKQLFDKVVEMQKQIDAKFSNDDERAKVMGAIGSLSTAVGKFQSGDPAKIASGCLDILVGISSVLKDFAKFSPIFSILSLVVGLFSGTKAEESVGSVVKKAVQEQSDQELQEALYGVKREYAVSKAFLDGVRNETSDLSPTEVSALAANVPIYQGVRFIAMVVQRIKYIKPKTESEIKRMLTMLELFTDLCSLRDLILLDLYQLVATPGHSPNIASGIKEVSNLGREEYKKVFEDLLKNDDKETYLFLSYLYPREKNEQSRKIFNFFDLMKVKYDDRLKQDLTGVKIFSNVHWPNYFMCSSNDYLALICTKPYGSLKLDKLNDGYYSIKTTQHDPKICHRYGNYILFTHKRNDDLEKFNFVPVKLEKREIYLLSSKESPNKFAYVPQNADGALFFVDGIPSKVGYGNQGYFTLVE</sequence>